<gene>
    <name evidence="3" type="primary">sacIM</name>
</gene>
<accession>O31073</accession>
<evidence type="ECO:0000255" key="1">
    <source>
        <dbReference type="PROSITE-ProRule" id="PRU01016"/>
    </source>
</evidence>
<evidence type="ECO:0000303" key="2">
    <source>
    </source>
</evidence>
<evidence type="ECO:0000303" key="3">
    <source>
    </source>
</evidence>
<evidence type="ECO:0000305" key="4">
    <source>
    </source>
</evidence>
<dbReference type="EC" id="2.1.1.37"/>
<dbReference type="EMBL" id="AF027867">
    <property type="protein sequence ID" value="AAC97118.1"/>
    <property type="molecule type" value="Genomic_DNA"/>
</dbReference>
<dbReference type="SMR" id="O31073"/>
<dbReference type="PRO" id="PR:O31073"/>
<dbReference type="GO" id="GO:0003886">
    <property type="term" value="F:DNA (cytosine-5-)-methyltransferase activity"/>
    <property type="evidence" value="ECO:0007669"/>
    <property type="project" value="UniProtKB-EC"/>
</dbReference>
<dbReference type="GO" id="GO:0003677">
    <property type="term" value="F:DNA binding"/>
    <property type="evidence" value="ECO:0007669"/>
    <property type="project" value="UniProtKB-KW"/>
</dbReference>
<dbReference type="GO" id="GO:0009307">
    <property type="term" value="P:DNA restriction-modification system"/>
    <property type="evidence" value="ECO:0007669"/>
    <property type="project" value="UniProtKB-KW"/>
</dbReference>
<dbReference type="GO" id="GO:0032259">
    <property type="term" value="P:methylation"/>
    <property type="evidence" value="ECO:0007669"/>
    <property type="project" value="UniProtKB-KW"/>
</dbReference>
<dbReference type="GO" id="GO:0044027">
    <property type="term" value="P:negative regulation of gene expression via chromosomal CpG island methylation"/>
    <property type="evidence" value="ECO:0007669"/>
    <property type="project" value="TreeGrafter"/>
</dbReference>
<dbReference type="Gene3D" id="3.90.120.10">
    <property type="entry name" value="DNA Methylase, subunit A, domain 2"/>
    <property type="match status" value="1"/>
</dbReference>
<dbReference type="Gene3D" id="3.40.50.150">
    <property type="entry name" value="Vaccinia Virus protein VP39"/>
    <property type="match status" value="1"/>
</dbReference>
<dbReference type="InterPro" id="IPR050390">
    <property type="entry name" value="C5-Methyltransferase"/>
</dbReference>
<dbReference type="InterPro" id="IPR001525">
    <property type="entry name" value="C5_MeTfrase"/>
</dbReference>
<dbReference type="InterPro" id="IPR029063">
    <property type="entry name" value="SAM-dependent_MTases_sf"/>
</dbReference>
<dbReference type="NCBIfam" id="TIGR00675">
    <property type="entry name" value="dcm"/>
    <property type="match status" value="1"/>
</dbReference>
<dbReference type="PANTHER" id="PTHR10629">
    <property type="entry name" value="CYTOSINE-SPECIFIC METHYLTRANSFERASE"/>
    <property type="match status" value="1"/>
</dbReference>
<dbReference type="PANTHER" id="PTHR10629:SF52">
    <property type="entry name" value="DNA (CYTOSINE-5)-METHYLTRANSFERASE 1"/>
    <property type="match status" value="1"/>
</dbReference>
<dbReference type="Pfam" id="PF00145">
    <property type="entry name" value="DNA_methylase"/>
    <property type="match status" value="1"/>
</dbReference>
<dbReference type="PRINTS" id="PR00105">
    <property type="entry name" value="C5METTRFRASE"/>
</dbReference>
<dbReference type="SUPFAM" id="SSF53335">
    <property type="entry name" value="S-adenosyl-L-methionine-dependent methyltransferases"/>
    <property type="match status" value="1"/>
</dbReference>
<dbReference type="PROSITE" id="PS51679">
    <property type="entry name" value="SAM_MT_C5"/>
    <property type="match status" value="1"/>
</dbReference>
<reference key="1">
    <citation type="journal article" date="1998" name="Mol. Gen. Genet.">
        <title>Cloning and expression of the ApaLI, NspI, NspHI, SacI, ScaI, and SapI restriction-modification systems in Escherichia coli.</title>
        <authorList>
            <person name="Xu S.-Y."/>
            <person name="Xiao J.-P."/>
            <person name="Ettwiller L."/>
            <person name="Holden M."/>
            <person name="Aliotta J."/>
            <person name="Poh C.L."/>
            <person name="Dalton M."/>
            <person name="Robinson D.P."/>
            <person name="Petronzio T.R."/>
            <person name="Moran L."/>
            <person name="Ganatra M."/>
            <person name="Ware J."/>
            <person name="Slatko B."/>
            <person name="Benner J. II"/>
        </authorList>
    </citation>
    <scope>NUCLEOTIDE SEQUENCE [GENOMIC DNA]</scope>
    <scope>FUNCTION</scope>
    <source>
        <strain>ATCC 12767 / CBS 458.68 / DSM 40028 / JCM 4121 / NBRC 12735 / NRRL B-2120</strain>
    </source>
</reference>
<reference key="2">
    <citation type="journal article" date="2003" name="Nucleic Acids Res.">
        <title>A nomenclature for restriction enzymes, DNA methyltransferases, homing endonucleases and their genes.</title>
        <authorList>
            <person name="Roberts R.J."/>
            <person name="Belfort M."/>
            <person name="Bestor T."/>
            <person name="Bhagwat A.S."/>
            <person name="Bickle T.A."/>
            <person name="Bitinaite J."/>
            <person name="Blumenthal R.M."/>
            <person name="Degtyarev S.K."/>
            <person name="Dryden D.T."/>
            <person name="Dybvig K."/>
            <person name="Firman K."/>
            <person name="Gromova E.S."/>
            <person name="Gumport R.I."/>
            <person name="Halford S.E."/>
            <person name="Hattman S."/>
            <person name="Heitman J."/>
            <person name="Hornby D.P."/>
            <person name="Janulaitis A."/>
            <person name="Jeltsch A."/>
            <person name="Josephsen J."/>
            <person name="Kiss A."/>
            <person name="Klaenhammer T.R."/>
            <person name="Kobayashi I."/>
            <person name="Kong H."/>
            <person name="Krueger D.H."/>
            <person name="Lacks S."/>
            <person name="Marinus M.G."/>
            <person name="Miyahara M."/>
            <person name="Morgan R.D."/>
            <person name="Murray N.E."/>
            <person name="Nagaraja V."/>
            <person name="Piekarowicz A."/>
            <person name="Pingoud A."/>
            <person name="Raleigh E."/>
            <person name="Rao D.N."/>
            <person name="Reich N."/>
            <person name="Repin V.E."/>
            <person name="Selker E.U."/>
            <person name="Shaw P.C."/>
            <person name="Stein D.C."/>
            <person name="Stoddard B.L."/>
            <person name="Szybalski W."/>
            <person name="Trautner T.A."/>
            <person name="Van Etten J.L."/>
            <person name="Vitor J.M."/>
            <person name="Wilson G.G."/>
            <person name="Xu S.Y."/>
        </authorList>
    </citation>
    <scope>NOMENCLATURE</scope>
    <scope>SUBTYPE</scope>
</reference>
<comment type="function">
    <text evidence="2 4">A beta methylase recognizes the double-stranded sequence 5'-GAGCTC-3', methylates C-4 on both strands, and protects the DNA from cleavage by the SacI endonuclease.</text>
</comment>
<comment type="catalytic activity">
    <reaction>
        <text>a 2'-deoxycytidine in DNA + S-adenosyl-L-methionine = a 5-methyl-2'-deoxycytidine in DNA + S-adenosyl-L-homocysteine + H(+)</text>
        <dbReference type="Rhea" id="RHEA:13681"/>
        <dbReference type="Rhea" id="RHEA-COMP:11369"/>
        <dbReference type="Rhea" id="RHEA-COMP:11370"/>
        <dbReference type="ChEBI" id="CHEBI:15378"/>
        <dbReference type="ChEBI" id="CHEBI:57856"/>
        <dbReference type="ChEBI" id="CHEBI:59789"/>
        <dbReference type="ChEBI" id="CHEBI:85452"/>
        <dbReference type="ChEBI" id="CHEBI:85454"/>
        <dbReference type="EC" id="2.1.1.37"/>
    </reaction>
</comment>
<comment type="similarity">
    <text evidence="1">Belongs to the class I-like SAM-binding methyltransferase superfamily. C5-methyltransferase family.</text>
</comment>
<protein>
    <recommendedName>
        <fullName evidence="2">Type II methyltransferase M.SacI</fullName>
        <shortName evidence="3">M.SacI</shortName>
        <ecNumber>2.1.1.37</ecNumber>
    </recommendedName>
    <alternativeName>
        <fullName>Cytosine-specific methyltransferase SacI</fullName>
    </alternativeName>
    <alternativeName>
        <fullName>Modification methylase SacI</fullName>
    </alternativeName>
</protein>
<feature type="chain" id="PRO_0000087909" description="Type II methyltransferase M.SacI">
    <location>
        <begin position="1"/>
        <end position="390"/>
    </location>
</feature>
<feature type="domain" description="SAM-dependent MTase C5-type" evidence="1">
    <location>
        <begin position="5"/>
        <end position="371"/>
    </location>
</feature>
<feature type="active site" evidence="1">
    <location>
        <position position="96"/>
    </location>
</feature>
<proteinExistence type="inferred from homology"/>
<keyword id="KW-0238">DNA-binding</keyword>
<keyword id="KW-0489">Methyltransferase</keyword>
<keyword id="KW-0680">Restriction system</keyword>
<keyword id="KW-0949">S-adenosyl-L-methionine</keyword>
<keyword id="KW-0808">Transferase</keyword>
<sequence>MNHELPVISLFSGAGGLDCAIESCAEPPLVQDGSGSPLRVAVATDYEQTALDTLSANFPHTKTLCGDIQTIPTAELLEAGGLKPGDPTLVIGGPPCTPFSKSGFWIEEKRNSADPNASLLDEYVRVVRESKPEAFILENVQGLTYKTHQAQFDRLIAGLKDAGYNPTFRVLLAAEYGVPQLRRRVFVVGRRDGKAFHFPETTHSGESERDRVIDHTKIPFTSLREALAGLPDVPEAGEVVEGTYAELAAEVPPGQNYLWHTDRYGGRNEFKWRSRYWTFLLKADPDRPSTTLQAQPGPWVGPFHWENVKNANGEERARRFRVAEMKRIMTFPDEFVFTGVKREVQRQIGNPVPVELGKVVVRALMEQLGYLDSRGTTIPSQAGHEQLELI</sequence>
<organism>
    <name type="scientific">Streptomyces achromogenes</name>
    <dbReference type="NCBI Taxonomy" id="67255"/>
    <lineage>
        <taxon>Bacteria</taxon>
        <taxon>Bacillati</taxon>
        <taxon>Actinomycetota</taxon>
        <taxon>Actinomycetes</taxon>
        <taxon>Kitasatosporales</taxon>
        <taxon>Streptomycetaceae</taxon>
        <taxon>Streptomyces</taxon>
    </lineage>
</organism>
<name>MTS1_STRAH</name>